<reference key="1">
    <citation type="journal article" date="2008" name="Environ. Microbiol.">
        <title>The complete genome sequence of Moorella thermoacetica (f. Clostridium thermoaceticum).</title>
        <authorList>
            <person name="Pierce E."/>
            <person name="Xie G."/>
            <person name="Barabote R.D."/>
            <person name="Saunders E."/>
            <person name="Han C.S."/>
            <person name="Detter J.C."/>
            <person name="Richardson P."/>
            <person name="Brettin T.S."/>
            <person name="Das A."/>
            <person name="Ljungdahl L.G."/>
            <person name="Ragsdale S.W."/>
        </authorList>
    </citation>
    <scope>NUCLEOTIDE SEQUENCE [LARGE SCALE GENOMIC DNA]</scope>
    <source>
        <strain>ATCC 39073 / JCM 9320</strain>
    </source>
</reference>
<protein>
    <recommendedName>
        <fullName evidence="1">Small ribosomal subunit protein uS7</fullName>
    </recommendedName>
    <alternativeName>
        <fullName evidence="2">30S ribosomal protein S7</fullName>
    </alternativeName>
</protein>
<proteinExistence type="inferred from homology"/>
<accession>Q2RFP3</accession>
<sequence length="156" mass="17689">MPRRGRVPRRAVLADPLYGNTKVTKLINQVMLDGKKSLAQRICYDAFEIIKNKTGKDPVEVFEQALKNVMPVLEVKARRVGGANYQVPVEVRPERRQTLGIRWLVNYARARSGKSMQEKLAAELIDAANNTGGAVKKREDTHKMAEANKAFAHYRW</sequence>
<gene>
    <name evidence="1" type="primary">rpsG</name>
    <name type="ordered locus">Moth_2464</name>
</gene>
<organism>
    <name type="scientific">Moorella thermoacetica (strain ATCC 39073 / JCM 9320)</name>
    <dbReference type="NCBI Taxonomy" id="264732"/>
    <lineage>
        <taxon>Bacteria</taxon>
        <taxon>Bacillati</taxon>
        <taxon>Bacillota</taxon>
        <taxon>Clostridia</taxon>
        <taxon>Moorellales</taxon>
        <taxon>Moorellaceae</taxon>
        <taxon>Moorella</taxon>
    </lineage>
</organism>
<feature type="chain" id="PRO_0000241761" description="Small ribosomal subunit protein uS7">
    <location>
        <begin position="1"/>
        <end position="156"/>
    </location>
</feature>
<dbReference type="EMBL" id="CP000232">
    <property type="protein sequence ID" value="ABC20746.1"/>
    <property type="molecule type" value="Genomic_DNA"/>
</dbReference>
<dbReference type="RefSeq" id="YP_431289.1">
    <property type="nucleotide sequence ID" value="NC_007644.1"/>
</dbReference>
<dbReference type="SMR" id="Q2RFP3"/>
<dbReference type="STRING" id="264732.Moth_2464"/>
<dbReference type="EnsemblBacteria" id="ABC20746">
    <property type="protein sequence ID" value="ABC20746"/>
    <property type="gene ID" value="Moth_2464"/>
</dbReference>
<dbReference type="KEGG" id="mta:Moth_2464"/>
<dbReference type="PATRIC" id="fig|264732.11.peg.2682"/>
<dbReference type="eggNOG" id="COG0049">
    <property type="taxonomic scope" value="Bacteria"/>
</dbReference>
<dbReference type="HOGENOM" id="CLU_072226_1_1_9"/>
<dbReference type="OrthoDB" id="9807653at2"/>
<dbReference type="GO" id="GO:0015935">
    <property type="term" value="C:small ribosomal subunit"/>
    <property type="evidence" value="ECO:0007669"/>
    <property type="project" value="InterPro"/>
</dbReference>
<dbReference type="GO" id="GO:0019843">
    <property type="term" value="F:rRNA binding"/>
    <property type="evidence" value="ECO:0007669"/>
    <property type="project" value="UniProtKB-UniRule"/>
</dbReference>
<dbReference type="GO" id="GO:0003735">
    <property type="term" value="F:structural constituent of ribosome"/>
    <property type="evidence" value="ECO:0007669"/>
    <property type="project" value="InterPro"/>
</dbReference>
<dbReference type="GO" id="GO:0000049">
    <property type="term" value="F:tRNA binding"/>
    <property type="evidence" value="ECO:0007669"/>
    <property type="project" value="UniProtKB-UniRule"/>
</dbReference>
<dbReference type="GO" id="GO:0006412">
    <property type="term" value="P:translation"/>
    <property type="evidence" value="ECO:0007669"/>
    <property type="project" value="UniProtKB-UniRule"/>
</dbReference>
<dbReference type="CDD" id="cd14869">
    <property type="entry name" value="uS7_Bacteria"/>
    <property type="match status" value="1"/>
</dbReference>
<dbReference type="FunFam" id="1.10.455.10:FF:000001">
    <property type="entry name" value="30S ribosomal protein S7"/>
    <property type="match status" value="1"/>
</dbReference>
<dbReference type="Gene3D" id="1.10.455.10">
    <property type="entry name" value="Ribosomal protein S7 domain"/>
    <property type="match status" value="1"/>
</dbReference>
<dbReference type="HAMAP" id="MF_00480_B">
    <property type="entry name" value="Ribosomal_uS7_B"/>
    <property type="match status" value="1"/>
</dbReference>
<dbReference type="InterPro" id="IPR000235">
    <property type="entry name" value="Ribosomal_uS7"/>
</dbReference>
<dbReference type="InterPro" id="IPR005717">
    <property type="entry name" value="Ribosomal_uS7_bac/org-type"/>
</dbReference>
<dbReference type="InterPro" id="IPR023798">
    <property type="entry name" value="Ribosomal_uS7_dom"/>
</dbReference>
<dbReference type="InterPro" id="IPR036823">
    <property type="entry name" value="Ribosomal_uS7_dom_sf"/>
</dbReference>
<dbReference type="NCBIfam" id="TIGR01029">
    <property type="entry name" value="rpsG_bact"/>
    <property type="match status" value="1"/>
</dbReference>
<dbReference type="PANTHER" id="PTHR11205">
    <property type="entry name" value="RIBOSOMAL PROTEIN S7"/>
    <property type="match status" value="1"/>
</dbReference>
<dbReference type="Pfam" id="PF00177">
    <property type="entry name" value="Ribosomal_S7"/>
    <property type="match status" value="1"/>
</dbReference>
<dbReference type="PIRSF" id="PIRSF002122">
    <property type="entry name" value="RPS7p_RPS7a_RPS5e_RPS7o"/>
    <property type="match status" value="1"/>
</dbReference>
<dbReference type="SUPFAM" id="SSF47973">
    <property type="entry name" value="Ribosomal protein S7"/>
    <property type="match status" value="1"/>
</dbReference>
<comment type="function">
    <text evidence="1">One of the primary rRNA binding proteins, it binds directly to 16S rRNA where it nucleates assembly of the head domain of the 30S subunit. Is located at the subunit interface close to the decoding center, probably blocks exit of the E-site tRNA.</text>
</comment>
<comment type="subunit">
    <text evidence="1">Part of the 30S ribosomal subunit. Contacts proteins S9 and S11.</text>
</comment>
<comment type="similarity">
    <text evidence="1">Belongs to the universal ribosomal protein uS7 family.</text>
</comment>
<evidence type="ECO:0000255" key="1">
    <source>
        <dbReference type="HAMAP-Rule" id="MF_00480"/>
    </source>
</evidence>
<evidence type="ECO:0000305" key="2"/>
<keyword id="KW-0687">Ribonucleoprotein</keyword>
<keyword id="KW-0689">Ribosomal protein</keyword>
<keyword id="KW-0694">RNA-binding</keyword>
<keyword id="KW-0699">rRNA-binding</keyword>
<keyword id="KW-0820">tRNA-binding</keyword>
<name>RS7_MOOTA</name>